<keyword id="KW-0489">Methyltransferase</keyword>
<keyword id="KW-0949">S-adenosyl-L-methionine</keyword>
<keyword id="KW-0808">Transferase</keyword>
<keyword id="KW-0819">tRNA processing</keyword>
<gene>
    <name evidence="2" type="primary">trmB</name>
    <name type="ordered locus">LBUL_1416</name>
</gene>
<comment type="function">
    <text evidence="2">Catalyzes the formation of N(7)-methylguanine at position 46 (m7G46) in tRNA.</text>
</comment>
<comment type="catalytic activity">
    <reaction evidence="2">
        <text>guanosine(46) in tRNA + S-adenosyl-L-methionine = N(7)-methylguanosine(46) in tRNA + S-adenosyl-L-homocysteine</text>
        <dbReference type="Rhea" id="RHEA:42708"/>
        <dbReference type="Rhea" id="RHEA-COMP:10188"/>
        <dbReference type="Rhea" id="RHEA-COMP:10189"/>
        <dbReference type="ChEBI" id="CHEBI:57856"/>
        <dbReference type="ChEBI" id="CHEBI:59789"/>
        <dbReference type="ChEBI" id="CHEBI:74269"/>
        <dbReference type="ChEBI" id="CHEBI:74480"/>
        <dbReference type="EC" id="2.1.1.33"/>
    </reaction>
</comment>
<comment type="pathway">
    <text evidence="2">tRNA modification; N(7)-methylguanine-tRNA biosynthesis.</text>
</comment>
<comment type="similarity">
    <text evidence="2">Belongs to the class I-like SAM-binding methyltransferase superfamily. TrmB family.</text>
</comment>
<name>TRMB_LACDB</name>
<sequence length="218" mass="24814">MRLKNKPWANELVEEHPESALDRPNPAEKIDWAARFGNDKPIEIEVGSGKGQFITTLAKQHPDRNFVAMEIQKTAAGIILKKKLDEGLDNLQILCADAANLVAYFGENSTSKIYLNFSDPWPKSRHEKRRLTYKDFLAKYQAVLTGDGLIEFKTDNSGLFAYSVKSMNNYGMHFDFMSVDLHHESEEIVEKNVETEYEHKFASKGQPIYCLHAGFLAK</sequence>
<proteinExistence type="inferred from homology"/>
<dbReference type="EC" id="2.1.1.33" evidence="2"/>
<dbReference type="EMBL" id="CP000412">
    <property type="protein sequence ID" value="ABJ58926.1"/>
    <property type="molecule type" value="Genomic_DNA"/>
</dbReference>
<dbReference type="RefSeq" id="WP_003618358.1">
    <property type="nucleotide sequence ID" value="NC_008529.1"/>
</dbReference>
<dbReference type="SMR" id="Q049E6"/>
<dbReference type="KEGG" id="lbu:LBUL_1416"/>
<dbReference type="HOGENOM" id="CLU_050910_2_1_9"/>
<dbReference type="BioCyc" id="LDEL321956:LBUL_RS06675-MONOMER"/>
<dbReference type="UniPathway" id="UPA00989"/>
<dbReference type="GO" id="GO:0043527">
    <property type="term" value="C:tRNA methyltransferase complex"/>
    <property type="evidence" value="ECO:0007669"/>
    <property type="project" value="TreeGrafter"/>
</dbReference>
<dbReference type="GO" id="GO:0008176">
    <property type="term" value="F:tRNA (guanine(46)-N7)-methyltransferase activity"/>
    <property type="evidence" value="ECO:0007669"/>
    <property type="project" value="UniProtKB-UniRule"/>
</dbReference>
<dbReference type="CDD" id="cd02440">
    <property type="entry name" value="AdoMet_MTases"/>
    <property type="match status" value="1"/>
</dbReference>
<dbReference type="FunFam" id="3.40.50.150:FF:000035">
    <property type="entry name" value="tRNA (guanine-N(7)-)-methyltransferase"/>
    <property type="match status" value="1"/>
</dbReference>
<dbReference type="Gene3D" id="3.40.50.150">
    <property type="entry name" value="Vaccinia Virus protein VP39"/>
    <property type="match status" value="1"/>
</dbReference>
<dbReference type="HAMAP" id="MF_01057">
    <property type="entry name" value="tRNA_methyltr_TrmB"/>
    <property type="match status" value="1"/>
</dbReference>
<dbReference type="InterPro" id="IPR029063">
    <property type="entry name" value="SAM-dependent_MTases_sf"/>
</dbReference>
<dbReference type="InterPro" id="IPR003358">
    <property type="entry name" value="tRNA_(Gua-N-7)_MeTrfase_Trmb"/>
</dbReference>
<dbReference type="InterPro" id="IPR055361">
    <property type="entry name" value="tRNA_methyltr_TrmB_bact"/>
</dbReference>
<dbReference type="NCBIfam" id="NF001080">
    <property type="entry name" value="PRK00121.2-2"/>
    <property type="match status" value="1"/>
</dbReference>
<dbReference type="NCBIfam" id="TIGR00091">
    <property type="entry name" value="tRNA (guanosine(46)-N7)-methyltransferase TrmB"/>
    <property type="match status" value="1"/>
</dbReference>
<dbReference type="PANTHER" id="PTHR23417">
    <property type="entry name" value="3-DEOXY-D-MANNO-OCTULOSONIC-ACID TRANSFERASE/TRNA GUANINE-N 7 - -METHYLTRANSFERASE"/>
    <property type="match status" value="1"/>
</dbReference>
<dbReference type="PANTHER" id="PTHR23417:SF14">
    <property type="entry name" value="PENTACOTRIPEPTIDE-REPEAT REGION OF PRORP DOMAIN-CONTAINING PROTEIN"/>
    <property type="match status" value="1"/>
</dbReference>
<dbReference type="Pfam" id="PF02390">
    <property type="entry name" value="Methyltransf_4"/>
    <property type="match status" value="1"/>
</dbReference>
<dbReference type="SUPFAM" id="SSF53335">
    <property type="entry name" value="S-adenosyl-L-methionine-dependent methyltransferases"/>
    <property type="match status" value="1"/>
</dbReference>
<dbReference type="PROSITE" id="PS51625">
    <property type="entry name" value="SAM_MT_TRMB"/>
    <property type="match status" value="1"/>
</dbReference>
<evidence type="ECO:0000250" key="1"/>
<evidence type="ECO:0000255" key="2">
    <source>
        <dbReference type="HAMAP-Rule" id="MF_01057"/>
    </source>
</evidence>
<evidence type="ECO:0000256" key="3">
    <source>
        <dbReference type="SAM" id="MobiDB-lite"/>
    </source>
</evidence>
<reference key="1">
    <citation type="journal article" date="2006" name="Proc. Natl. Acad. Sci. U.S.A.">
        <title>Comparative genomics of the lactic acid bacteria.</title>
        <authorList>
            <person name="Makarova K.S."/>
            <person name="Slesarev A."/>
            <person name="Wolf Y.I."/>
            <person name="Sorokin A."/>
            <person name="Mirkin B."/>
            <person name="Koonin E.V."/>
            <person name="Pavlov A."/>
            <person name="Pavlova N."/>
            <person name="Karamychev V."/>
            <person name="Polouchine N."/>
            <person name="Shakhova V."/>
            <person name="Grigoriev I."/>
            <person name="Lou Y."/>
            <person name="Rohksar D."/>
            <person name="Lucas S."/>
            <person name="Huang K."/>
            <person name="Goodstein D.M."/>
            <person name="Hawkins T."/>
            <person name="Plengvidhya V."/>
            <person name="Welker D."/>
            <person name="Hughes J."/>
            <person name="Goh Y."/>
            <person name="Benson A."/>
            <person name="Baldwin K."/>
            <person name="Lee J.-H."/>
            <person name="Diaz-Muniz I."/>
            <person name="Dosti B."/>
            <person name="Smeianov V."/>
            <person name="Wechter W."/>
            <person name="Barabote R."/>
            <person name="Lorca G."/>
            <person name="Altermann E."/>
            <person name="Barrangou R."/>
            <person name="Ganesan B."/>
            <person name="Xie Y."/>
            <person name="Rawsthorne H."/>
            <person name="Tamir D."/>
            <person name="Parker C."/>
            <person name="Breidt F."/>
            <person name="Broadbent J.R."/>
            <person name="Hutkins R."/>
            <person name="O'Sullivan D."/>
            <person name="Steele J."/>
            <person name="Unlu G."/>
            <person name="Saier M.H. Jr."/>
            <person name="Klaenhammer T."/>
            <person name="Richardson P."/>
            <person name="Kozyavkin S."/>
            <person name="Weimer B.C."/>
            <person name="Mills D.A."/>
        </authorList>
    </citation>
    <scope>NUCLEOTIDE SEQUENCE [LARGE SCALE GENOMIC DNA]</scope>
    <source>
        <strain>ATCC BAA-365 / Lb-18</strain>
    </source>
</reference>
<feature type="chain" id="PRO_0000288164" description="tRNA (guanine-N(7)-)-methyltransferase">
    <location>
        <begin position="1"/>
        <end position="218"/>
    </location>
</feature>
<feature type="region of interest" description="Disordered" evidence="3">
    <location>
        <begin position="1"/>
        <end position="25"/>
    </location>
</feature>
<feature type="region of interest" description="Interaction with RNA" evidence="2">
    <location>
        <begin position="125"/>
        <end position="130"/>
    </location>
</feature>
<feature type="compositionally biased region" description="Basic and acidic residues" evidence="3">
    <location>
        <begin position="13"/>
        <end position="25"/>
    </location>
</feature>
<feature type="active site" evidence="1">
    <location>
        <position position="119"/>
    </location>
</feature>
<feature type="binding site" evidence="2">
    <location>
        <position position="45"/>
    </location>
    <ligand>
        <name>S-adenosyl-L-methionine</name>
        <dbReference type="ChEBI" id="CHEBI:59789"/>
    </ligand>
</feature>
<feature type="binding site" evidence="2">
    <location>
        <position position="70"/>
    </location>
    <ligand>
        <name>S-adenosyl-L-methionine</name>
        <dbReference type="ChEBI" id="CHEBI:59789"/>
    </ligand>
</feature>
<feature type="binding site" evidence="2">
    <location>
        <position position="97"/>
    </location>
    <ligand>
        <name>S-adenosyl-L-methionine</name>
        <dbReference type="ChEBI" id="CHEBI:59789"/>
    </ligand>
</feature>
<feature type="binding site" evidence="2">
    <location>
        <position position="119"/>
    </location>
    <ligand>
        <name>S-adenosyl-L-methionine</name>
        <dbReference type="ChEBI" id="CHEBI:59789"/>
    </ligand>
</feature>
<feature type="binding site" evidence="2">
    <location>
        <position position="123"/>
    </location>
    <ligand>
        <name>substrate</name>
    </ligand>
</feature>
<feature type="binding site" evidence="2">
    <location>
        <position position="155"/>
    </location>
    <ligand>
        <name>substrate</name>
    </ligand>
</feature>
<feature type="binding site" evidence="2">
    <location>
        <begin position="195"/>
        <end position="198"/>
    </location>
    <ligand>
        <name>substrate</name>
    </ligand>
</feature>
<protein>
    <recommendedName>
        <fullName evidence="2">tRNA (guanine-N(7)-)-methyltransferase</fullName>
        <ecNumber evidence="2">2.1.1.33</ecNumber>
    </recommendedName>
    <alternativeName>
        <fullName evidence="2">tRNA (guanine(46)-N(7))-methyltransferase</fullName>
    </alternativeName>
    <alternativeName>
        <fullName evidence="2">tRNA(m7G46)-methyltransferase</fullName>
    </alternativeName>
</protein>
<organism>
    <name type="scientific">Lactobacillus delbrueckii subsp. bulgaricus (strain ATCC BAA-365 / Lb-18)</name>
    <dbReference type="NCBI Taxonomy" id="321956"/>
    <lineage>
        <taxon>Bacteria</taxon>
        <taxon>Bacillati</taxon>
        <taxon>Bacillota</taxon>
        <taxon>Bacilli</taxon>
        <taxon>Lactobacillales</taxon>
        <taxon>Lactobacillaceae</taxon>
        <taxon>Lactobacillus</taxon>
    </lineage>
</organism>
<accession>Q049E6</accession>